<keyword id="KW-0238">DNA-binding</keyword>
<keyword id="KW-1185">Reference proteome</keyword>
<dbReference type="EMBL" id="X15638">
    <property type="protein sequence ID" value="CAA33655.1"/>
    <property type="molecule type" value="Genomic_DNA"/>
</dbReference>
<dbReference type="EMBL" id="X15639">
    <property type="protein sequence ID" value="CAA33661.1"/>
    <property type="molecule type" value="Genomic_DNA"/>
</dbReference>
<dbReference type="EMBL" id="AF234172">
    <property type="protein sequence ID" value="AAQ14021.1"/>
    <property type="molecule type" value="Genomic_DNA"/>
</dbReference>
<dbReference type="EMBL" id="X17512">
    <property type="status" value="NOT_ANNOTATED_CDS"/>
    <property type="molecule type" value="Genomic_DNA"/>
</dbReference>
<dbReference type="PIR" id="S04262">
    <property type="entry name" value="KIBPP1"/>
</dbReference>
<dbReference type="RefSeq" id="YP_006517.1">
    <property type="nucleotide sequence ID" value="NC_005856.1"/>
</dbReference>
<dbReference type="GeneID" id="2777383"/>
<dbReference type="KEGG" id="vg:2777383"/>
<dbReference type="Proteomes" id="UP000008091">
    <property type="component" value="Genome"/>
</dbReference>
<dbReference type="GO" id="GO:0003677">
    <property type="term" value="F:DNA binding"/>
    <property type="evidence" value="ECO:0007669"/>
    <property type="project" value="UniProtKB-KW"/>
</dbReference>
<dbReference type="InterPro" id="IPR005039">
    <property type="entry name" value="Ant_C"/>
</dbReference>
<dbReference type="InterPro" id="IPR018004">
    <property type="entry name" value="KilA/APSES_HTH"/>
</dbReference>
<dbReference type="InterPro" id="IPR017880">
    <property type="entry name" value="KilA_N"/>
</dbReference>
<dbReference type="Pfam" id="PF03374">
    <property type="entry name" value="ANT"/>
    <property type="match status" value="1"/>
</dbReference>
<dbReference type="Pfam" id="PF04383">
    <property type="entry name" value="KilA-N"/>
    <property type="match status" value="1"/>
</dbReference>
<dbReference type="SMART" id="SM01252">
    <property type="entry name" value="KilA-N"/>
    <property type="match status" value="1"/>
</dbReference>
<dbReference type="PROSITE" id="PS51301">
    <property type="entry name" value="KILA_N"/>
    <property type="match status" value="1"/>
</dbReference>
<organismHost>
    <name type="scientific">Enterobacteriaceae</name>
    <dbReference type="NCBI Taxonomy" id="543"/>
</organismHost>
<protein>
    <recommendedName>
        <fullName>Protein kilA</fullName>
    </recommendedName>
</protein>
<name>KILA_BPP1</name>
<sequence length="266" mass="29576">MQQTFNADMNISNLHQNVDPSTTLPVICGVEITTDRAGRYNLNALHRASGLGAHKAPAQWLRTLSAKQLIEELEKETMQNCIVSFEGRGGGTFAHELLAVEYAGWISPAFRLKVNQTFIDYRTGRLQPAIPQSLPEALRLAADLAEQKQRLEQKMLMDAPKVEFAERVATASGVLIGNYAKVLGLGQNYLFTWLRDNGILIATGERRNVPKQEYISRGYFTLKETVIDTSNGSRISFTTRITGKGQQWLMKRLLDAGVLVPVAATR</sequence>
<feature type="chain" id="PRO_0000165274" description="Protein kilA">
    <location>
        <begin position="1"/>
        <end position="266"/>
    </location>
</feature>
<feature type="domain" description="KilA-N" evidence="2">
    <location>
        <begin position="21"/>
        <end position="121"/>
    </location>
</feature>
<feature type="DNA-binding region" description="H-T-H motif" evidence="1">
    <location>
        <begin position="176"/>
        <end position="195"/>
    </location>
</feature>
<comment type="function">
    <text>Not essential for vegetative replication. Either interferes with plasmid establishment after transformation or is lethal to cells. May be related or lytic development of P1.</text>
</comment>
<gene>
    <name type="primary">kilA</name>
</gene>
<proteinExistence type="predicted"/>
<evidence type="ECO:0000255" key="1"/>
<evidence type="ECO:0000255" key="2">
    <source>
        <dbReference type="PROSITE-ProRule" id="PRU00631"/>
    </source>
</evidence>
<accession>P19653</accession>
<reference key="1">
    <citation type="journal article" date="1989" name="J. Mol. Biol.">
        <title>Structure and regulation of the lytic replicon of phage P1.</title>
        <authorList>
            <person name="Hansen E.B."/>
        </authorList>
    </citation>
    <scope>NUCLEOTIDE SEQUENCE [GENOMIC DNA]</scope>
</reference>
<reference key="2">
    <citation type="journal article" date="1989" name="J. Mol. Biol.">
        <title>Genetic analysis of the lytic replicon of bacteriophage P1. II. Organization of replicon elements.</title>
        <authorList>
            <person name="Sternberg N."/>
            <person name="Cohen G."/>
        </authorList>
    </citation>
    <scope>NUCLEOTIDE SEQUENCE [GENOMIC DNA]</scope>
</reference>
<reference key="3">
    <citation type="journal article" date="2004" name="J. Bacteriol.">
        <title>Genome of bacteriophage P1.</title>
        <authorList>
            <person name="Lobocka M.B."/>
            <person name="Rose D.J."/>
            <person name="Plunkett G. III"/>
            <person name="Rusin M."/>
            <person name="Samojedny A."/>
            <person name="Lehnherr H."/>
            <person name="Yarmolinsky M.B."/>
            <person name="Blattner F.R."/>
        </authorList>
    </citation>
    <scope>NUCLEOTIDE SEQUENCE [LARGE SCALE GENOMIC DNA]</scope>
</reference>
<reference key="4">
    <citation type="journal article" date="1989" name="J. Mol. Biol.">
        <title>Organization of the immunity region immI of bacteriophage P1 and synthesis of the P1 antirepressor.</title>
        <authorList>
            <person name="Heisig A."/>
            <person name="Riedel H.D."/>
            <person name="Dobrinski B."/>
            <person name="Lurz R."/>
            <person name="Schuster H."/>
        </authorList>
    </citation>
    <scope>NUCLEOTIDE SEQUENCE [GENOMIC DNA] OF 1-164</scope>
</reference>
<organism>
    <name type="scientific">Escherichia phage P1</name>
    <name type="common">Bacteriophage P1</name>
    <dbReference type="NCBI Taxonomy" id="2886926"/>
    <lineage>
        <taxon>Viruses</taxon>
        <taxon>Duplodnaviria</taxon>
        <taxon>Heunggongvirae</taxon>
        <taxon>Uroviricota</taxon>
        <taxon>Caudoviricetes</taxon>
        <taxon>Punavirus</taxon>
        <taxon>Punavirus P1</taxon>
    </lineage>
</organism>